<name>Y2910_MYCTU</name>
<accession>P9WL25</accession>
<accession>L0TDX4</accession>
<accession>P65053</accession>
<accession>Q10827</accession>
<keyword id="KW-1185">Reference proteome</keyword>
<gene>
    <name type="ordered locus">Rv2910c</name>
    <name type="ORF">MTCY274.42c</name>
</gene>
<feature type="chain" id="PRO_0000104098" description="Uncharacterized protein Rv2910c">
    <location>
        <begin position="1"/>
        <end position="147"/>
    </location>
</feature>
<reference key="1">
    <citation type="journal article" date="1998" name="Nature">
        <title>Deciphering the biology of Mycobacterium tuberculosis from the complete genome sequence.</title>
        <authorList>
            <person name="Cole S.T."/>
            <person name="Brosch R."/>
            <person name="Parkhill J."/>
            <person name="Garnier T."/>
            <person name="Churcher C.M."/>
            <person name="Harris D.E."/>
            <person name="Gordon S.V."/>
            <person name="Eiglmeier K."/>
            <person name="Gas S."/>
            <person name="Barry C.E. III"/>
            <person name="Tekaia F."/>
            <person name="Badcock K."/>
            <person name="Basham D."/>
            <person name="Brown D."/>
            <person name="Chillingworth T."/>
            <person name="Connor R."/>
            <person name="Davies R.M."/>
            <person name="Devlin K."/>
            <person name="Feltwell T."/>
            <person name="Gentles S."/>
            <person name="Hamlin N."/>
            <person name="Holroyd S."/>
            <person name="Hornsby T."/>
            <person name="Jagels K."/>
            <person name="Krogh A."/>
            <person name="McLean J."/>
            <person name="Moule S."/>
            <person name="Murphy L.D."/>
            <person name="Oliver S."/>
            <person name="Osborne J."/>
            <person name="Quail M.A."/>
            <person name="Rajandream M.A."/>
            <person name="Rogers J."/>
            <person name="Rutter S."/>
            <person name="Seeger K."/>
            <person name="Skelton S."/>
            <person name="Squares S."/>
            <person name="Squares R."/>
            <person name="Sulston J.E."/>
            <person name="Taylor K."/>
            <person name="Whitehead S."/>
            <person name="Barrell B.G."/>
        </authorList>
    </citation>
    <scope>NUCLEOTIDE SEQUENCE [LARGE SCALE GENOMIC DNA]</scope>
    <source>
        <strain>ATCC 25618 / H37Rv</strain>
    </source>
</reference>
<reference key="2">
    <citation type="journal article" date="2008" name="BMC Syst. Biol.">
        <title>targetTB: a target identification pipeline for Mycobacterium tuberculosis through an interactome, reactome and genome-scale structural analysis.</title>
        <authorList>
            <person name="Raman K."/>
            <person name="Yeturu K."/>
            <person name="Chandra N."/>
        </authorList>
    </citation>
    <scope>IDENTIFICATION AS A DRUG TARGET [LARGE SCALE ANALYSIS]</scope>
</reference>
<reference key="3">
    <citation type="journal article" date="2011" name="Mol. Cell. Proteomics">
        <title>Proteogenomic analysis of Mycobacterium tuberculosis by high resolution mass spectrometry.</title>
        <authorList>
            <person name="Kelkar D.S."/>
            <person name="Kumar D."/>
            <person name="Kumar P."/>
            <person name="Balakrishnan L."/>
            <person name="Muthusamy B."/>
            <person name="Yadav A.K."/>
            <person name="Shrivastava P."/>
            <person name="Marimuthu A."/>
            <person name="Anand S."/>
            <person name="Sundaram H."/>
            <person name="Kingsbury R."/>
            <person name="Harsha H.C."/>
            <person name="Nair B."/>
            <person name="Prasad T.S."/>
            <person name="Chauhan D.S."/>
            <person name="Katoch K."/>
            <person name="Katoch V.M."/>
            <person name="Kumar P."/>
            <person name="Chaerkady R."/>
            <person name="Ramachandran S."/>
            <person name="Dash D."/>
            <person name="Pandey A."/>
        </authorList>
    </citation>
    <scope>IDENTIFICATION BY MASS SPECTROMETRY [LARGE SCALE ANALYSIS]</scope>
    <source>
        <strain>ATCC 25618 / H37Rv</strain>
    </source>
</reference>
<sequence length="147" mass="17049">MCAVLDRSMLSVAEISDRLEIQQLLVDYSSAIDQRRFDDLDRVFTPDAYIDYRALGGIDGRYPKIKQWLSQVLGNFPVYAHMLGNFSVRVDGDTASSRVICFNPMVFAGDRQQVLFCGLWYDDDFVRTPDGWRIIRRVETKCFQKMM</sequence>
<protein>
    <recommendedName>
        <fullName>Uncharacterized protein Rv2910c</fullName>
    </recommendedName>
</protein>
<comment type="miscellaneous">
    <text>Was identified as a high-confidence drug target.</text>
</comment>
<organism>
    <name type="scientific">Mycobacterium tuberculosis (strain ATCC 25618 / H37Rv)</name>
    <dbReference type="NCBI Taxonomy" id="83332"/>
    <lineage>
        <taxon>Bacteria</taxon>
        <taxon>Bacillati</taxon>
        <taxon>Actinomycetota</taxon>
        <taxon>Actinomycetes</taxon>
        <taxon>Mycobacteriales</taxon>
        <taxon>Mycobacteriaceae</taxon>
        <taxon>Mycobacterium</taxon>
        <taxon>Mycobacterium tuberculosis complex</taxon>
    </lineage>
</organism>
<dbReference type="EMBL" id="AL123456">
    <property type="protein sequence ID" value="CCP45712.1"/>
    <property type="molecule type" value="Genomic_DNA"/>
</dbReference>
<dbReference type="PIR" id="A70928">
    <property type="entry name" value="A70928"/>
</dbReference>
<dbReference type="RefSeq" id="NP_217426.1">
    <property type="nucleotide sequence ID" value="NC_000962.3"/>
</dbReference>
<dbReference type="RefSeq" id="WP_003414734.1">
    <property type="nucleotide sequence ID" value="NC_000962.3"/>
</dbReference>
<dbReference type="SMR" id="P9WL25"/>
<dbReference type="STRING" id="83332.Rv2910c"/>
<dbReference type="PaxDb" id="83332-Rv2910c"/>
<dbReference type="DNASU" id="887387"/>
<dbReference type="GeneID" id="887387"/>
<dbReference type="KEGG" id="mtu:Rv2910c"/>
<dbReference type="KEGG" id="mtv:RVBD_2910c"/>
<dbReference type="PATRIC" id="fig|83332.111.peg.3239"/>
<dbReference type="TubercuList" id="Rv2910c"/>
<dbReference type="eggNOG" id="COG5517">
    <property type="taxonomic scope" value="Bacteria"/>
</dbReference>
<dbReference type="InParanoid" id="P9WL25"/>
<dbReference type="OrthoDB" id="981191at2"/>
<dbReference type="PhylomeDB" id="P9WL25"/>
<dbReference type="Proteomes" id="UP000001584">
    <property type="component" value="Chromosome"/>
</dbReference>
<dbReference type="CDD" id="cd00531">
    <property type="entry name" value="NTF2_like"/>
    <property type="match status" value="1"/>
</dbReference>
<dbReference type="Gene3D" id="3.10.450.50">
    <property type="match status" value="1"/>
</dbReference>
<dbReference type="InterPro" id="IPR032710">
    <property type="entry name" value="NTF2-like_dom_sf"/>
</dbReference>
<dbReference type="InterPro" id="IPR037401">
    <property type="entry name" value="SnoaL-like"/>
</dbReference>
<dbReference type="Pfam" id="PF13577">
    <property type="entry name" value="SnoaL_4"/>
    <property type="match status" value="1"/>
</dbReference>
<dbReference type="SUPFAM" id="SSF54427">
    <property type="entry name" value="NTF2-like"/>
    <property type="match status" value="1"/>
</dbReference>
<proteinExistence type="evidence at protein level"/>